<proteinExistence type="inferred from homology"/>
<organism>
    <name type="scientific">Thiobacillus denitrificans (strain ATCC 25259 / T1)</name>
    <dbReference type="NCBI Taxonomy" id="292415"/>
    <lineage>
        <taxon>Bacteria</taxon>
        <taxon>Pseudomonadati</taxon>
        <taxon>Pseudomonadota</taxon>
        <taxon>Betaproteobacteria</taxon>
        <taxon>Nitrosomonadales</taxon>
        <taxon>Thiobacillaceae</taxon>
        <taxon>Thiobacillus</taxon>
    </lineage>
</organism>
<accession>Q3SGC3</accession>
<sequence length="189" mass="20643">MAPSCPTRSRVWSSRTSPPPDLAESEAWVVMGRVSAPFGVKGWVKVQPFSEDPGTLMDFESWRVGRGEQQAQYAVEAVQDHGKSLVAKLVGIDDRDAAFALRGQEVSVAKSALPPPEENEFYWSDLIGLTVMNREGVELGKVDSLMESGAHDLLVVKGRREHLIPFVAAFVGKVDLAGGTVEVDWGEDY</sequence>
<name>RIMM_THIDA</name>
<dbReference type="EMBL" id="CP000116">
    <property type="protein sequence ID" value="AAZ98327.1"/>
    <property type="molecule type" value="Genomic_DNA"/>
</dbReference>
<dbReference type="RefSeq" id="WP_011312886.1">
    <property type="nucleotide sequence ID" value="NC_007404.1"/>
</dbReference>
<dbReference type="SMR" id="Q3SGC3"/>
<dbReference type="STRING" id="292415.Tbd_2374"/>
<dbReference type="KEGG" id="tbd:Tbd_2374"/>
<dbReference type="eggNOG" id="COG0806">
    <property type="taxonomic scope" value="Bacteria"/>
</dbReference>
<dbReference type="HOGENOM" id="CLU_077636_1_0_4"/>
<dbReference type="OrthoDB" id="9783509at2"/>
<dbReference type="Proteomes" id="UP000008291">
    <property type="component" value="Chromosome"/>
</dbReference>
<dbReference type="GO" id="GO:0005737">
    <property type="term" value="C:cytoplasm"/>
    <property type="evidence" value="ECO:0007669"/>
    <property type="project" value="UniProtKB-SubCell"/>
</dbReference>
<dbReference type="GO" id="GO:0005840">
    <property type="term" value="C:ribosome"/>
    <property type="evidence" value="ECO:0007669"/>
    <property type="project" value="InterPro"/>
</dbReference>
<dbReference type="GO" id="GO:0043022">
    <property type="term" value="F:ribosome binding"/>
    <property type="evidence" value="ECO:0007669"/>
    <property type="project" value="InterPro"/>
</dbReference>
<dbReference type="GO" id="GO:0042274">
    <property type="term" value="P:ribosomal small subunit biogenesis"/>
    <property type="evidence" value="ECO:0007669"/>
    <property type="project" value="UniProtKB-UniRule"/>
</dbReference>
<dbReference type="GO" id="GO:0006364">
    <property type="term" value="P:rRNA processing"/>
    <property type="evidence" value="ECO:0007669"/>
    <property type="project" value="UniProtKB-UniRule"/>
</dbReference>
<dbReference type="Gene3D" id="2.30.30.240">
    <property type="entry name" value="PRC-barrel domain"/>
    <property type="match status" value="1"/>
</dbReference>
<dbReference type="Gene3D" id="2.40.30.60">
    <property type="entry name" value="RimM"/>
    <property type="match status" value="1"/>
</dbReference>
<dbReference type="HAMAP" id="MF_00014">
    <property type="entry name" value="Ribosome_mat_RimM"/>
    <property type="match status" value="1"/>
</dbReference>
<dbReference type="InterPro" id="IPR011033">
    <property type="entry name" value="PRC_barrel-like_sf"/>
</dbReference>
<dbReference type="InterPro" id="IPR056792">
    <property type="entry name" value="PRC_RimM"/>
</dbReference>
<dbReference type="InterPro" id="IPR011961">
    <property type="entry name" value="RimM"/>
</dbReference>
<dbReference type="InterPro" id="IPR002676">
    <property type="entry name" value="RimM_N"/>
</dbReference>
<dbReference type="InterPro" id="IPR036976">
    <property type="entry name" value="RimM_N_sf"/>
</dbReference>
<dbReference type="InterPro" id="IPR009000">
    <property type="entry name" value="Transl_B-barrel_sf"/>
</dbReference>
<dbReference type="NCBIfam" id="TIGR02273">
    <property type="entry name" value="16S_RimM"/>
    <property type="match status" value="1"/>
</dbReference>
<dbReference type="PANTHER" id="PTHR33692">
    <property type="entry name" value="RIBOSOME MATURATION FACTOR RIMM"/>
    <property type="match status" value="1"/>
</dbReference>
<dbReference type="PANTHER" id="PTHR33692:SF1">
    <property type="entry name" value="RIBOSOME MATURATION FACTOR RIMM"/>
    <property type="match status" value="1"/>
</dbReference>
<dbReference type="Pfam" id="PF24986">
    <property type="entry name" value="PRC_RimM"/>
    <property type="match status" value="1"/>
</dbReference>
<dbReference type="Pfam" id="PF01782">
    <property type="entry name" value="RimM"/>
    <property type="match status" value="1"/>
</dbReference>
<dbReference type="SUPFAM" id="SSF50346">
    <property type="entry name" value="PRC-barrel domain"/>
    <property type="match status" value="1"/>
</dbReference>
<dbReference type="SUPFAM" id="SSF50447">
    <property type="entry name" value="Translation proteins"/>
    <property type="match status" value="1"/>
</dbReference>
<comment type="function">
    <text evidence="1">An accessory protein needed during the final step in the assembly of 30S ribosomal subunit, possibly for assembly of the head region. Essential for efficient processing of 16S rRNA. May be needed both before and after RbfA during the maturation of 16S rRNA. It has affinity for free ribosomal 30S subunits but not for 70S ribosomes.</text>
</comment>
<comment type="subunit">
    <text evidence="1">Binds ribosomal protein uS19.</text>
</comment>
<comment type="subcellular location">
    <subcellularLocation>
        <location evidence="1">Cytoplasm</location>
    </subcellularLocation>
</comment>
<comment type="domain">
    <text evidence="1">The PRC barrel domain binds ribosomal protein uS19.</text>
</comment>
<comment type="similarity">
    <text evidence="1">Belongs to the RimM family.</text>
</comment>
<gene>
    <name evidence="1" type="primary">rimM</name>
    <name type="ordered locus">Tbd_2374</name>
</gene>
<reference key="1">
    <citation type="journal article" date="2006" name="J. Bacteriol.">
        <title>The genome sequence of the obligately chemolithoautotrophic, facultatively anaerobic bacterium Thiobacillus denitrificans.</title>
        <authorList>
            <person name="Beller H.R."/>
            <person name="Chain P.S."/>
            <person name="Letain T.E."/>
            <person name="Chakicherla A."/>
            <person name="Larimer F.W."/>
            <person name="Richardson P.M."/>
            <person name="Coleman M.A."/>
            <person name="Wood A.P."/>
            <person name="Kelly D.P."/>
        </authorList>
    </citation>
    <scope>NUCLEOTIDE SEQUENCE [LARGE SCALE GENOMIC DNA]</scope>
    <source>
        <strain>ATCC 25259 / T1</strain>
    </source>
</reference>
<protein>
    <recommendedName>
        <fullName evidence="1">Ribosome maturation factor RimM</fullName>
    </recommendedName>
</protein>
<evidence type="ECO:0000255" key="1">
    <source>
        <dbReference type="HAMAP-Rule" id="MF_00014"/>
    </source>
</evidence>
<evidence type="ECO:0000256" key="2">
    <source>
        <dbReference type="SAM" id="MobiDB-lite"/>
    </source>
</evidence>
<keyword id="KW-0143">Chaperone</keyword>
<keyword id="KW-0963">Cytoplasm</keyword>
<keyword id="KW-1185">Reference proteome</keyword>
<keyword id="KW-0690">Ribosome biogenesis</keyword>
<keyword id="KW-0698">rRNA processing</keyword>
<feature type="chain" id="PRO_0000244183" description="Ribosome maturation factor RimM">
    <location>
        <begin position="1"/>
        <end position="189"/>
    </location>
</feature>
<feature type="domain" description="PRC barrel" evidence="1">
    <location>
        <begin position="118"/>
        <end position="189"/>
    </location>
</feature>
<feature type="region of interest" description="Disordered" evidence="2">
    <location>
        <begin position="1"/>
        <end position="21"/>
    </location>
</feature>
<feature type="compositionally biased region" description="Polar residues" evidence="2">
    <location>
        <begin position="1"/>
        <end position="16"/>
    </location>
</feature>